<accession>P55615</accession>
<comment type="similarity">
    <text evidence="1">Belongs to the transposase 20 family.</text>
</comment>
<organism>
    <name type="scientific">Sinorhizobium fredii (strain NBRC 101917 / NGR234)</name>
    <dbReference type="NCBI Taxonomy" id="394"/>
    <lineage>
        <taxon>Bacteria</taxon>
        <taxon>Pseudomonadati</taxon>
        <taxon>Pseudomonadota</taxon>
        <taxon>Alphaproteobacteria</taxon>
        <taxon>Hyphomicrobiales</taxon>
        <taxon>Rhizobiaceae</taxon>
        <taxon>Sinorhizobium/Ensifer group</taxon>
        <taxon>Sinorhizobium</taxon>
    </lineage>
</organism>
<protein>
    <recommendedName>
        <fullName>Putative transposase y4pF/y4sB</fullName>
    </recommendedName>
</protein>
<proteinExistence type="inferred from homology"/>
<gene>
    <name type="ordered locus">NGR_a02060</name>
    <name type="ORF">y4pF</name>
</gene>
<gene>
    <name type="ordered locus">NGR_a01700</name>
    <name type="ORF">y4sB</name>
</gene>
<evidence type="ECO:0000305" key="1"/>
<sequence length="387" mass="42934">MGASWHQTIRALGSAHHVEVDGSQRHRMCQNEFVEVLNRGKPSVEQIIRIGMDTSKSVFQLHGVNAVEQPILRKKLSRREMVKFFEKTPPTIIALEACGGSHHWARLLSSFGHEVKLIAPQLAKPYVKRGKNDAADAEALCEAMSRPTMRFVPMKTADQQAALMLVGMRERLIRNRTQLANAIRGFAMEFGIVAAKGMCRIEALLERIAADPSLPELAQDLFALHGQEYRELACQIKTLDEKLMKLHRADECSKRLAEIPGVGPIGASLLLMKTPDPRMFKSGRDFAAWIGLTPKDHSTAGKVRLGVITRAGDEMLRSILVVGATSLLQQVRTGRSRHASAWLMGLLQRKRPKLVAVALANKLARIAWKLMTSGESYRQAEGQAQTS</sequence>
<geneLocation type="plasmid">
    <name>sym pNGR234a</name>
</geneLocation>
<dbReference type="EMBL" id="U00090">
    <property type="protein sequence ID" value="AAB91816.1"/>
    <property type="molecule type" value="Genomic_DNA"/>
</dbReference>
<dbReference type="EMBL" id="U00090">
    <property type="protein sequence ID" value="AAB91842.1"/>
    <property type="molecule type" value="Genomic_DNA"/>
</dbReference>
<dbReference type="RefSeq" id="NP_444019.1">
    <property type="nucleotide sequence ID" value="NC_000914.2"/>
</dbReference>
<dbReference type="RefSeq" id="NP_444055.1">
    <property type="nucleotide sequence ID" value="NC_000914.2"/>
</dbReference>
<dbReference type="SMR" id="P55615"/>
<dbReference type="KEGG" id="rhi:NGR_a01700"/>
<dbReference type="KEGG" id="rhi:NGR_a02060"/>
<dbReference type="PATRIC" id="fig|394.7.peg.164"/>
<dbReference type="eggNOG" id="COG3547">
    <property type="taxonomic scope" value="Bacteria"/>
</dbReference>
<dbReference type="HOGENOM" id="CLU_036902_3_1_5"/>
<dbReference type="OrthoDB" id="5289737at2"/>
<dbReference type="Proteomes" id="UP000001054">
    <property type="component" value="Plasmid pNGR234a"/>
</dbReference>
<dbReference type="GO" id="GO:0003677">
    <property type="term" value="F:DNA binding"/>
    <property type="evidence" value="ECO:0007669"/>
    <property type="project" value="UniProtKB-KW"/>
</dbReference>
<dbReference type="GO" id="GO:0004803">
    <property type="term" value="F:transposase activity"/>
    <property type="evidence" value="ECO:0007669"/>
    <property type="project" value="InterPro"/>
</dbReference>
<dbReference type="GO" id="GO:0006313">
    <property type="term" value="P:DNA transposition"/>
    <property type="evidence" value="ECO:0007669"/>
    <property type="project" value="InterPro"/>
</dbReference>
<dbReference type="InterPro" id="IPR002525">
    <property type="entry name" value="Transp_IS110-like_N"/>
</dbReference>
<dbReference type="InterPro" id="IPR047650">
    <property type="entry name" value="Transpos_IS110"/>
</dbReference>
<dbReference type="InterPro" id="IPR003346">
    <property type="entry name" value="Transposase_20"/>
</dbReference>
<dbReference type="NCBIfam" id="NF033542">
    <property type="entry name" value="transpos_IS110"/>
    <property type="match status" value="1"/>
</dbReference>
<dbReference type="PANTHER" id="PTHR33055:SF3">
    <property type="entry name" value="PUTATIVE TRANSPOSASE FOR IS117-RELATED"/>
    <property type="match status" value="1"/>
</dbReference>
<dbReference type="PANTHER" id="PTHR33055">
    <property type="entry name" value="TRANSPOSASE FOR INSERTION SEQUENCE ELEMENT IS1111A"/>
    <property type="match status" value="1"/>
</dbReference>
<dbReference type="Pfam" id="PF01548">
    <property type="entry name" value="DEDD_Tnp_IS110"/>
    <property type="match status" value="1"/>
</dbReference>
<dbReference type="Pfam" id="PF02371">
    <property type="entry name" value="Transposase_20"/>
    <property type="match status" value="1"/>
</dbReference>
<name>Y4PF_SINFN</name>
<keyword id="KW-0233">DNA recombination</keyword>
<keyword id="KW-0238">DNA-binding</keyword>
<keyword id="KW-0614">Plasmid</keyword>
<keyword id="KW-1185">Reference proteome</keyword>
<keyword id="KW-0814">Transposable element</keyword>
<keyword id="KW-0815">Transposition</keyword>
<reference key="1">
    <citation type="journal article" date="1997" name="Nature">
        <title>Molecular basis of symbiosis between Rhizobium and legumes.</title>
        <authorList>
            <person name="Freiberg C.A."/>
            <person name="Fellay R."/>
            <person name="Bairoch A."/>
            <person name="Broughton W.J."/>
            <person name="Rosenthal A."/>
            <person name="Perret X."/>
        </authorList>
    </citation>
    <scope>NUCLEOTIDE SEQUENCE [LARGE SCALE GENOMIC DNA]</scope>
    <source>
        <strain>NBRC 101917 / NGR234</strain>
    </source>
</reference>
<reference key="2">
    <citation type="journal article" date="2009" name="Appl. Environ. Microbiol.">
        <title>Rhizobium sp. strain NGR234 possesses a remarkable number of secretion systems.</title>
        <authorList>
            <person name="Schmeisser C."/>
            <person name="Liesegang H."/>
            <person name="Krysciak D."/>
            <person name="Bakkou N."/>
            <person name="Le Quere A."/>
            <person name="Wollherr A."/>
            <person name="Heinemeyer I."/>
            <person name="Morgenstern B."/>
            <person name="Pommerening-Roeser A."/>
            <person name="Flores M."/>
            <person name="Palacios R."/>
            <person name="Brenner S."/>
            <person name="Gottschalk G."/>
            <person name="Schmitz R.A."/>
            <person name="Broughton W.J."/>
            <person name="Perret X."/>
            <person name="Strittmatter A.W."/>
            <person name="Streit W.R."/>
        </authorList>
    </citation>
    <scope>NUCLEOTIDE SEQUENCE [LARGE SCALE GENOMIC DNA]</scope>
    <source>
        <strain>NBRC 101917 / NGR234</strain>
    </source>
</reference>
<feature type="chain" id="PRO_0000075455" description="Putative transposase y4pF/y4sB">
    <location>
        <begin position="1"/>
        <end position="387"/>
    </location>
</feature>